<protein>
    <recommendedName>
        <fullName evidence="1">UDP-3-O-acyl-N-acetylglucosamine deacetylase</fullName>
        <shortName evidence="1">UDP-3-O-acyl-GlcNAc deacetylase</shortName>
        <ecNumber evidence="1">3.5.1.108</ecNumber>
    </recommendedName>
    <alternativeName>
        <fullName evidence="1">UDP-3-O-[R-3-hydroxymyristoyl]-N-acetylglucosamine deacetylase</fullName>
    </alternativeName>
</protein>
<dbReference type="EC" id="3.5.1.108" evidence="1"/>
<dbReference type="EMBL" id="CP000786">
    <property type="protein sequence ID" value="ABZ97972.1"/>
    <property type="molecule type" value="Genomic_DNA"/>
</dbReference>
<dbReference type="RefSeq" id="WP_012388850.1">
    <property type="nucleotide sequence ID" value="NC_010602.1"/>
</dbReference>
<dbReference type="SMR" id="B0SS82"/>
<dbReference type="STRING" id="456481.LEPBI_I1868"/>
<dbReference type="KEGG" id="lbi:LEPBI_I1868"/>
<dbReference type="HOGENOM" id="CLU_046528_1_0_12"/>
<dbReference type="OrthoDB" id="9772788at2"/>
<dbReference type="BioCyc" id="LBIF456481:LEPBI_RS09225-MONOMER"/>
<dbReference type="UniPathway" id="UPA00359">
    <property type="reaction ID" value="UER00478"/>
</dbReference>
<dbReference type="Proteomes" id="UP000001847">
    <property type="component" value="Chromosome I"/>
</dbReference>
<dbReference type="GO" id="GO:0016020">
    <property type="term" value="C:membrane"/>
    <property type="evidence" value="ECO:0007669"/>
    <property type="project" value="GOC"/>
</dbReference>
<dbReference type="GO" id="GO:0046872">
    <property type="term" value="F:metal ion binding"/>
    <property type="evidence" value="ECO:0007669"/>
    <property type="project" value="UniProtKB-KW"/>
</dbReference>
<dbReference type="GO" id="GO:0103117">
    <property type="term" value="F:UDP-3-O-acyl-N-acetylglucosamine deacetylase activity"/>
    <property type="evidence" value="ECO:0007669"/>
    <property type="project" value="UniProtKB-UniRule"/>
</dbReference>
<dbReference type="GO" id="GO:0009245">
    <property type="term" value="P:lipid A biosynthetic process"/>
    <property type="evidence" value="ECO:0007669"/>
    <property type="project" value="UniProtKB-UniRule"/>
</dbReference>
<dbReference type="Gene3D" id="3.30.230.20">
    <property type="entry name" value="lpxc deacetylase, domain 1"/>
    <property type="match status" value="1"/>
</dbReference>
<dbReference type="Gene3D" id="3.30.1700.10">
    <property type="entry name" value="lpxc deacetylase, domain 2"/>
    <property type="match status" value="1"/>
</dbReference>
<dbReference type="HAMAP" id="MF_00388">
    <property type="entry name" value="LpxC"/>
    <property type="match status" value="1"/>
</dbReference>
<dbReference type="InterPro" id="IPR020568">
    <property type="entry name" value="Ribosomal_Su5_D2-typ_SF"/>
</dbReference>
<dbReference type="InterPro" id="IPR004463">
    <property type="entry name" value="UDP-acyl_GlcNac_deAcase"/>
</dbReference>
<dbReference type="InterPro" id="IPR011334">
    <property type="entry name" value="UDP-acyl_GlcNac_deAcase_C"/>
</dbReference>
<dbReference type="InterPro" id="IPR015870">
    <property type="entry name" value="UDP-acyl_N-AcGlcN_deAcase_N"/>
</dbReference>
<dbReference type="NCBIfam" id="TIGR00325">
    <property type="entry name" value="lpxC"/>
    <property type="match status" value="1"/>
</dbReference>
<dbReference type="PANTHER" id="PTHR33694">
    <property type="entry name" value="UDP-3-O-ACYL-N-ACETYLGLUCOSAMINE DEACETYLASE 1, MITOCHONDRIAL-RELATED"/>
    <property type="match status" value="1"/>
</dbReference>
<dbReference type="PANTHER" id="PTHR33694:SF1">
    <property type="entry name" value="UDP-3-O-ACYL-N-ACETYLGLUCOSAMINE DEACETYLASE 1, MITOCHONDRIAL-RELATED"/>
    <property type="match status" value="1"/>
</dbReference>
<dbReference type="Pfam" id="PF03331">
    <property type="entry name" value="LpxC"/>
    <property type="match status" value="1"/>
</dbReference>
<dbReference type="SUPFAM" id="SSF54211">
    <property type="entry name" value="Ribosomal protein S5 domain 2-like"/>
    <property type="match status" value="2"/>
</dbReference>
<proteinExistence type="inferred from homology"/>
<evidence type="ECO:0000255" key="1">
    <source>
        <dbReference type="HAMAP-Rule" id="MF_00388"/>
    </source>
</evidence>
<organism>
    <name type="scientific">Leptospira biflexa serovar Patoc (strain Patoc 1 / ATCC 23582 / Paris)</name>
    <dbReference type="NCBI Taxonomy" id="456481"/>
    <lineage>
        <taxon>Bacteria</taxon>
        <taxon>Pseudomonadati</taxon>
        <taxon>Spirochaetota</taxon>
        <taxon>Spirochaetia</taxon>
        <taxon>Leptospirales</taxon>
        <taxon>Leptospiraceae</taxon>
        <taxon>Leptospira</taxon>
    </lineage>
</organism>
<comment type="function">
    <text evidence="1">Catalyzes the hydrolysis of UDP-3-O-myristoyl-N-acetylglucosamine to form UDP-3-O-myristoylglucosamine and acetate, the committed step in lipid A biosynthesis.</text>
</comment>
<comment type="catalytic activity">
    <reaction evidence="1">
        <text>a UDP-3-O-[(3R)-3-hydroxyacyl]-N-acetyl-alpha-D-glucosamine + H2O = a UDP-3-O-[(3R)-3-hydroxyacyl]-alpha-D-glucosamine + acetate</text>
        <dbReference type="Rhea" id="RHEA:67816"/>
        <dbReference type="ChEBI" id="CHEBI:15377"/>
        <dbReference type="ChEBI" id="CHEBI:30089"/>
        <dbReference type="ChEBI" id="CHEBI:137740"/>
        <dbReference type="ChEBI" id="CHEBI:173225"/>
        <dbReference type="EC" id="3.5.1.108"/>
    </reaction>
</comment>
<comment type="cofactor">
    <cofactor evidence="1">
        <name>Zn(2+)</name>
        <dbReference type="ChEBI" id="CHEBI:29105"/>
    </cofactor>
</comment>
<comment type="pathway">
    <text evidence="1">Glycolipid biosynthesis; lipid IV(A) biosynthesis; lipid IV(A) from (3R)-3-hydroxytetradecanoyl-[acyl-carrier-protein] and UDP-N-acetyl-alpha-D-glucosamine: step 2/6.</text>
</comment>
<comment type="similarity">
    <text evidence="1">Belongs to the LpxC family.</text>
</comment>
<keyword id="KW-0378">Hydrolase</keyword>
<keyword id="KW-0441">Lipid A biosynthesis</keyword>
<keyword id="KW-0444">Lipid biosynthesis</keyword>
<keyword id="KW-0443">Lipid metabolism</keyword>
<keyword id="KW-0479">Metal-binding</keyword>
<keyword id="KW-1185">Reference proteome</keyword>
<keyword id="KW-0862">Zinc</keyword>
<accession>B0SS82</accession>
<reference key="1">
    <citation type="journal article" date="2008" name="PLoS ONE">
        <title>Genome sequence of the saprophyte Leptospira biflexa provides insights into the evolution of Leptospira and the pathogenesis of leptospirosis.</title>
        <authorList>
            <person name="Picardeau M."/>
            <person name="Bulach D.M."/>
            <person name="Bouchier C."/>
            <person name="Zuerner R.L."/>
            <person name="Zidane N."/>
            <person name="Wilson P.J."/>
            <person name="Creno S."/>
            <person name="Kuczek E.S."/>
            <person name="Bommezzadri S."/>
            <person name="Davis J.C."/>
            <person name="McGrath A."/>
            <person name="Johnson M.J."/>
            <person name="Boursaux-Eude C."/>
            <person name="Seemann T."/>
            <person name="Rouy Z."/>
            <person name="Coppel R.L."/>
            <person name="Rood J.I."/>
            <person name="Lajus A."/>
            <person name="Davies J.K."/>
            <person name="Medigue C."/>
            <person name="Adler B."/>
        </authorList>
    </citation>
    <scope>NUCLEOTIDE SEQUENCE [LARGE SCALE GENOMIC DNA]</scope>
    <source>
        <strain>Patoc 1 / ATCC 23582 / Paris</strain>
    </source>
</reference>
<gene>
    <name evidence="1" type="primary">lpxC</name>
    <name type="ordered locus">LEPBI_I1868</name>
</gene>
<name>LPXC_LEPBP</name>
<feature type="chain" id="PRO_1000122801" description="UDP-3-O-acyl-N-acetylglucosamine deacetylase">
    <location>
        <begin position="1"/>
        <end position="302"/>
    </location>
</feature>
<feature type="active site" description="Proton donor" evidence="1">
    <location>
        <position position="265"/>
    </location>
</feature>
<feature type="binding site" evidence="1">
    <location>
        <position position="82"/>
    </location>
    <ligand>
        <name>Zn(2+)</name>
        <dbReference type="ChEBI" id="CHEBI:29105"/>
    </ligand>
</feature>
<feature type="binding site" evidence="1">
    <location>
        <position position="238"/>
    </location>
    <ligand>
        <name>Zn(2+)</name>
        <dbReference type="ChEBI" id="CHEBI:29105"/>
    </ligand>
</feature>
<feature type="binding site" evidence="1">
    <location>
        <position position="242"/>
    </location>
    <ligand>
        <name>Zn(2+)</name>
        <dbReference type="ChEBI" id="CHEBI:29105"/>
    </ligand>
</feature>
<sequence length="302" mass="33172">MQTVIHRKTIQNSVTLKGIGVHSGKVVTLRLHPAEANTGLIFYLYKGIQKIRIPVSLDHVVDTSNATTIGDGSSNRVQTIEHLLAAVHTLGITDCIFEIDSVEVPIMDGSSLPFWEGIRSAGIRVLEETIEPITITNPIWVVDGDKYLVMLPSDELKVTYSIDFNHPLLRGQSYTTTLDESILGTDILPARTFGFLKDVEALQARGLAMGGSLDNAVVLTDDGYLNDHLRYDNECVRHKILDLVGDLAVMGRPFRGHLIASKAGHALDISLAKCIMSQVTGNELTQYKSKRIPLFSKKEAAK</sequence>